<organism>
    <name type="scientific">Ruminiclostridium cellulolyticum (strain ATCC 35319 / DSM 5812 / JCM 6584 / H10)</name>
    <name type="common">Clostridium cellulolyticum</name>
    <dbReference type="NCBI Taxonomy" id="394503"/>
    <lineage>
        <taxon>Bacteria</taxon>
        <taxon>Bacillati</taxon>
        <taxon>Bacillota</taxon>
        <taxon>Clostridia</taxon>
        <taxon>Eubacteriales</taxon>
        <taxon>Oscillospiraceae</taxon>
        <taxon>Ruminiclostridium</taxon>
    </lineage>
</organism>
<comment type="similarity">
    <text evidence="1">Belongs to the universal ribosomal protein uL29 family.</text>
</comment>
<proteinExistence type="inferred from homology"/>
<feature type="chain" id="PRO_1000194007" description="Large ribosomal subunit protein uL29">
    <location>
        <begin position="1"/>
        <end position="67"/>
    </location>
</feature>
<dbReference type="EMBL" id="CP001348">
    <property type="protein sequence ID" value="ACL75144.1"/>
    <property type="molecule type" value="Genomic_DNA"/>
</dbReference>
<dbReference type="RefSeq" id="WP_015924309.1">
    <property type="nucleotide sequence ID" value="NC_011898.1"/>
</dbReference>
<dbReference type="SMR" id="B8I7Y7"/>
<dbReference type="STRING" id="394503.Ccel_0766"/>
<dbReference type="KEGG" id="cce:Ccel_0766"/>
<dbReference type="eggNOG" id="COG0255">
    <property type="taxonomic scope" value="Bacteria"/>
</dbReference>
<dbReference type="HOGENOM" id="CLU_158491_5_2_9"/>
<dbReference type="OrthoDB" id="9815192at2"/>
<dbReference type="Proteomes" id="UP000001349">
    <property type="component" value="Chromosome"/>
</dbReference>
<dbReference type="GO" id="GO:0022625">
    <property type="term" value="C:cytosolic large ribosomal subunit"/>
    <property type="evidence" value="ECO:0007669"/>
    <property type="project" value="TreeGrafter"/>
</dbReference>
<dbReference type="GO" id="GO:0003735">
    <property type="term" value="F:structural constituent of ribosome"/>
    <property type="evidence" value="ECO:0007669"/>
    <property type="project" value="InterPro"/>
</dbReference>
<dbReference type="GO" id="GO:0006412">
    <property type="term" value="P:translation"/>
    <property type="evidence" value="ECO:0007669"/>
    <property type="project" value="UniProtKB-UniRule"/>
</dbReference>
<dbReference type="CDD" id="cd00427">
    <property type="entry name" value="Ribosomal_L29_HIP"/>
    <property type="match status" value="1"/>
</dbReference>
<dbReference type="FunFam" id="1.10.287.310:FF:000001">
    <property type="entry name" value="50S ribosomal protein L29"/>
    <property type="match status" value="1"/>
</dbReference>
<dbReference type="Gene3D" id="1.10.287.310">
    <property type="match status" value="1"/>
</dbReference>
<dbReference type="HAMAP" id="MF_00374">
    <property type="entry name" value="Ribosomal_uL29"/>
    <property type="match status" value="1"/>
</dbReference>
<dbReference type="InterPro" id="IPR050063">
    <property type="entry name" value="Ribosomal_protein_uL29"/>
</dbReference>
<dbReference type="InterPro" id="IPR001854">
    <property type="entry name" value="Ribosomal_uL29"/>
</dbReference>
<dbReference type="InterPro" id="IPR018254">
    <property type="entry name" value="Ribosomal_uL29_CS"/>
</dbReference>
<dbReference type="InterPro" id="IPR036049">
    <property type="entry name" value="Ribosomal_uL29_sf"/>
</dbReference>
<dbReference type="NCBIfam" id="TIGR00012">
    <property type="entry name" value="L29"/>
    <property type="match status" value="1"/>
</dbReference>
<dbReference type="PANTHER" id="PTHR10916">
    <property type="entry name" value="60S RIBOSOMAL PROTEIN L35/50S RIBOSOMAL PROTEIN L29"/>
    <property type="match status" value="1"/>
</dbReference>
<dbReference type="PANTHER" id="PTHR10916:SF0">
    <property type="entry name" value="LARGE RIBOSOMAL SUBUNIT PROTEIN UL29C"/>
    <property type="match status" value="1"/>
</dbReference>
<dbReference type="Pfam" id="PF00831">
    <property type="entry name" value="Ribosomal_L29"/>
    <property type="match status" value="1"/>
</dbReference>
<dbReference type="SUPFAM" id="SSF46561">
    <property type="entry name" value="Ribosomal protein L29 (L29p)"/>
    <property type="match status" value="1"/>
</dbReference>
<dbReference type="PROSITE" id="PS00579">
    <property type="entry name" value="RIBOSOMAL_L29"/>
    <property type="match status" value="1"/>
</dbReference>
<gene>
    <name evidence="1" type="primary">rpmC</name>
    <name type="ordered locus">Ccel_0766</name>
</gene>
<accession>B8I7Y7</accession>
<reference key="1">
    <citation type="submission" date="2009-01" db="EMBL/GenBank/DDBJ databases">
        <title>Complete sequence of Clostridium cellulolyticum H10.</title>
        <authorList>
            <consortium name="US DOE Joint Genome Institute"/>
            <person name="Lucas S."/>
            <person name="Copeland A."/>
            <person name="Lapidus A."/>
            <person name="Glavina del Rio T."/>
            <person name="Dalin E."/>
            <person name="Tice H."/>
            <person name="Bruce D."/>
            <person name="Goodwin L."/>
            <person name="Pitluck S."/>
            <person name="Chertkov O."/>
            <person name="Saunders E."/>
            <person name="Brettin T."/>
            <person name="Detter J.C."/>
            <person name="Han C."/>
            <person name="Larimer F."/>
            <person name="Land M."/>
            <person name="Hauser L."/>
            <person name="Kyrpides N."/>
            <person name="Ivanova N."/>
            <person name="Zhou J."/>
            <person name="Richardson P."/>
        </authorList>
    </citation>
    <scope>NUCLEOTIDE SEQUENCE [LARGE SCALE GENOMIC DNA]</scope>
    <source>
        <strain>ATCC 35319 / DSM 5812 / JCM 6584 / H10</strain>
    </source>
</reference>
<keyword id="KW-1185">Reference proteome</keyword>
<keyword id="KW-0687">Ribonucleoprotein</keyword>
<keyword id="KW-0689">Ribosomal protein</keyword>
<protein>
    <recommendedName>
        <fullName evidence="1">Large ribosomal subunit protein uL29</fullName>
    </recommendedName>
    <alternativeName>
        <fullName evidence="2">50S ribosomal protein L29</fullName>
    </alternativeName>
</protein>
<evidence type="ECO:0000255" key="1">
    <source>
        <dbReference type="HAMAP-Rule" id="MF_00374"/>
    </source>
</evidence>
<evidence type="ECO:0000305" key="2"/>
<name>RL29_RUMCH</name>
<sequence length="67" mass="7813">MKASEIREKDIVELNKELGELKSELFKLRFQLATNQLENPMKLKDVKKSIARVKTIIREKELSGNNK</sequence>